<protein>
    <recommendedName>
        <fullName evidence="7">Vanin-like protein 2</fullName>
        <ecNumber evidence="4">3.5.1.-</ecNumber>
    </recommendedName>
</protein>
<name>VNNL2_DROME</name>
<proteinExistence type="evidence at transcript level"/>
<keyword id="KW-0025">Alternative splicing</keyword>
<keyword id="KW-0325">Glycoprotein</keyword>
<keyword id="KW-0378">Hydrolase</keyword>
<keyword id="KW-1185">Reference proteome</keyword>
<keyword id="KW-0964">Secreted</keyword>
<keyword id="KW-0732">Signal</keyword>
<feature type="signal peptide" evidence="1">
    <location>
        <begin position="1"/>
        <end position="27"/>
    </location>
</feature>
<feature type="chain" id="PRO_0000019725" description="Vanin-like protein 2">
    <location>
        <begin position="28"/>
        <end position="525"/>
    </location>
</feature>
<feature type="domain" description="CN hydrolase" evidence="2">
    <location>
        <begin position="33"/>
        <end position="303"/>
    </location>
</feature>
<feature type="active site" description="Proton acceptor" evidence="2">
    <location>
        <position position="72"/>
    </location>
</feature>
<feature type="active site" description="Proton donor" evidence="2">
    <location>
        <position position="167"/>
    </location>
</feature>
<feature type="active site" description="Nucleophile" evidence="2">
    <location>
        <position position="199"/>
    </location>
</feature>
<feature type="glycosylation site" description="N-linked (GlcNAc...) asparagine" evidence="1">
    <location>
        <position position="20"/>
    </location>
</feature>
<feature type="glycosylation site" description="N-linked (GlcNAc...) asparagine" evidence="1">
    <location>
        <position position="61"/>
    </location>
</feature>
<feature type="glycosylation site" description="N-linked (GlcNAc...) asparagine" evidence="1">
    <location>
        <position position="99"/>
    </location>
</feature>
<feature type="glycosylation site" description="N-linked (GlcNAc...) asparagine" evidence="1">
    <location>
        <position position="116"/>
    </location>
</feature>
<feature type="glycosylation site" description="N-linked (GlcNAc...) asparagine" evidence="1">
    <location>
        <position position="124"/>
    </location>
</feature>
<feature type="glycosylation site" description="N-linked (GlcNAc...) asparagine" evidence="1">
    <location>
        <position position="176"/>
    </location>
</feature>
<feature type="glycosylation site" description="N-linked (GlcNAc...) asparagine" evidence="1">
    <location>
        <position position="333"/>
    </location>
</feature>
<feature type="glycosylation site" description="N-linked (GlcNAc...) asparagine" evidence="1">
    <location>
        <position position="348"/>
    </location>
</feature>
<feature type="glycosylation site" description="N-linked (GlcNAc...) asparagine" evidence="1">
    <location>
        <position position="375"/>
    </location>
</feature>
<feature type="splice variant" id="VSP_060649" description="In isoform A." evidence="4">
    <location>
        <begin position="235"/>
        <end position="242"/>
    </location>
</feature>
<comment type="subcellular location">
    <subcellularLocation>
        <location evidence="4">Secreted</location>
    </subcellularLocation>
</comment>
<comment type="alternative products">
    <event type="alternative splicing"/>
    <isoform>
        <id>Q8IRR1-1</id>
        <name evidence="7">B</name>
        <sequence type="displayed"/>
    </isoform>
    <isoform>
        <id>Q8IRR1-2</id>
        <name evidence="7">A</name>
        <sequence type="described" ref="VSP_060649"/>
    </isoform>
</comment>
<comment type="tissue specificity">
    <text evidence="3">Expressed in third instar larvae.</text>
</comment>
<comment type="induction">
    <text evidence="3">Induced by ethanol.</text>
</comment>
<comment type="similarity">
    <text evidence="4">Belongs to the carbon-nitrogen hydrolase superfamily. BTD/VNN family.</text>
</comment>
<comment type="sequence caution" evidence="4">
    <conflict type="erroneous initiation">
        <sequence resource="EMBL-CDS" id="ADG03455"/>
    </conflict>
    <text>Extended N-terminus.</text>
</comment>
<organism evidence="5">
    <name type="scientific">Drosophila melanogaster</name>
    <name type="common">Fruit fly</name>
    <dbReference type="NCBI Taxonomy" id="7227"/>
    <lineage>
        <taxon>Eukaryota</taxon>
        <taxon>Metazoa</taxon>
        <taxon>Ecdysozoa</taxon>
        <taxon>Arthropoda</taxon>
        <taxon>Hexapoda</taxon>
        <taxon>Insecta</taxon>
        <taxon>Pterygota</taxon>
        <taxon>Neoptera</taxon>
        <taxon>Endopterygota</taxon>
        <taxon>Diptera</taxon>
        <taxon>Brachycera</taxon>
        <taxon>Muscomorpha</taxon>
        <taxon>Ephydroidea</taxon>
        <taxon>Drosophilidae</taxon>
        <taxon>Drosophila</taxon>
        <taxon>Sophophora</taxon>
    </lineage>
</organism>
<evidence type="ECO:0000255" key="1"/>
<evidence type="ECO:0000255" key="2">
    <source>
        <dbReference type="PROSITE-ProRule" id="PRU00054"/>
    </source>
</evidence>
<evidence type="ECO:0000269" key="3">
    <source>
    </source>
</evidence>
<evidence type="ECO:0000305" key="4"/>
<evidence type="ECO:0000312" key="5">
    <source>
        <dbReference type="EMBL" id="AAN09160.1"/>
    </source>
</evidence>
<evidence type="ECO:0000312" key="6">
    <source>
        <dbReference type="EMBL" id="ADG03455.1"/>
    </source>
</evidence>
<evidence type="ECO:0000312" key="7">
    <source>
        <dbReference type="FlyBase" id="FBgn0052751"/>
    </source>
</evidence>
<accession>Q8IRR1</accession>
<accession>D5SHR9</accession>
<accession>X2JDW2</accession>
<gene>
    <name evidence="7" type="ORF">CG32751</name>
    <name evidence="7" type="ORF">CG3648</name>
</gene>
<dbReference type="EC" id="3.5.1.-" evidence="4"/>
<dbReference type="EMBL" id="AE014298">
    <property type="protein sequence ID" value="AAN09160.1"/>
    <property type="molecule type" value="Genomic_DNA"/>
</dbReference>
<dbReference type="EMBL" id="AE014298">
    <property type="protein sequence ID" value="AHN59398.1"/>
    <property type="molecule type" value="Genomic_DNA"/>
</dbReference>
<dbReference type="EMBL" id="BT124870">
    <property type="protein sequence ID" value="ADG03455.1"/>
    <property type="status" value="ALT_INIT"/>
    <property type="molecule type" value="mRNA"/>
</dbReference>
<dbReference type="RefSeq" id="NP_001284927.1">
    <molecule id="Q8IRR1-1"/>
    <property type="nucleotide sequence ID" value="NM_001297998.1"/>
</dbReference>
<dbReference type="RefSeq" id="NP_727068.1">
    <molecule id="Q8IRR1-2"/>
    <property type="nucleotide sequence ID" value="NM_167061.3"/>
</dbReference>
<dbReference type="SMR" id="Q8IRR1"/>
<dbReference type="FunCoup" id="Q8IRR1">
    <property type="interactions" value="3"/>
</dbReference>
<dbReference type="STRING" id="7227.FBpp0309511"/>
<dbReference type="GlyGen" id="Q8IRR1">
    <property type="glycosylation" value="9 sites"/>
</dbReference>
<dbReference type="PaxDb" id="7227-FBpp0070845"/>
<dbReference type="EnsemblMetazoa" id="FBtr0070880">
    <molecule id="Q8IRR1-2"/>
    <property type="protein sequence ID" value="FBpp0070845"/>
    <property type="gene ID" value="FBgn0052751"/>
</dbReference>
<dbReference type="EnsemblMetazoa" id="FBtr0340669">
    <molecule id="Q8IRR1-1"/>
    <property type="protein sequence ID" value="FBpp0309511"/>
    <property type="gene ID" value="FBgn0052751"/>
</dbReference>
<dbReference type="GeneID" id="318189"/>
<dbReference type="KEGG" id="dme:Dmel_CG32751"/>
<dbReference type="UCSC" id="CG32751-RA">
    <molecule id="Q8IRR1-1"/>
    <property type="organism name" value="d. melanogaster"/>
</dbReference>
<dbReference type="AGR" id="FB:FBgn0052751"/>
<dbReference type="FlyBase" id="FBgn0052751">
    <property type="gene designation" value="CG32751"/>
</dbReference>
<dbReference type="VEuPathDB" id="VectorBase:FBgn0052751"/>
<dbReference type="eggNOG" id="KOG0806">
    <property type="taxonomic scope" value="Eukaryota"/>
</dbReference>
<dbReference type="GeneTree" id="ENSGT00390000013823"/>
<dbReference type="HOGENOM" id="CLU_033209_1_0_1"/>
<dbReference type="InParanoid" id="Q8IRR1"/>
<dbReference type="OMA" id="FGFNPVQ"/>
<dbReference type="OrthoDB" id="10250282at2759"/>
<dbReference type="PhylomeDB" id="Q8IRR1"/>
<dbReference type="BioGRID-ORCS" id="318189">
    <property type="hits" value="0 hits in 3 CRISPR screens"/>
</dbReference>
<dbReference type="ChiTaRS" id="vanin-like">
    <property type="organism name" value="fly"/>
</dbReference>
<dbReference type="GenomeRNAi" id="318189"/>
<dbReference type="PRO" id="PR:Q8IRR1"/>
<dbReference type="Proteomes" id="UP000000803">
    <property type="component" value="Chromosome X"/>
</dbReference>
<dbReference type="Bgee" id="FBgn0052751">
    <property type="expression patterns" value="Expressed in spermathecum and 3 other cell types or tissues"/>
</dbReference>
<dbReference type="ExpressionAtlas" id="Q8IRR1">
    <property type="expression patterns" value="baseline and differential"/>
</dbReference>
<dbReference type="GO" id="GO:0005576">
    <property type="term" value="C:extracellular region"/>
    <property type="evidence" value="ECO:0007669"/>
    <property type="project" value="UniProtKB-SubCell"/>
</dbReference>
<dbReference type="GO" id="GO:0017159">
    <property type="term" value="F:pantetheine hydrolase activity"/>
    <property type="evidence" value="ECO:0000250"/>
    <property type="project" value="FlyBase"/>
</dbReference>
<dbReference type="CDD" id="cd07567">
    <property type="entry name" value="biotinidase_like"/>
    <property type="match status" value="1"/>
</dbReference>
<dbReference type="Gene3D" id="3.60.110.10">
    <property type="entry name" value="Carbon-nitrogen hydrolase"/>
    <property type="match status" value="1"/>
</dbReference>
<dbReference type="InterPro" id="IPR012101">
    <property type="entry name" value="Biotinidase-like_euk"/>
</dbReference>
<dbReference type="InterPro" id="IPR040154">
    <property type="entry name" value="Biotinidase/VNN"/>
</dbReference>
<dbReference type="InterPro" id="IPR003010">
    <property type="entry name" value="C-N_Hydrolase"/>
</dbReference>
<dbReference type="InterPro" id="IPR036526">
    <property type="entry name" value="C-N_Hydrolase_sf"/>
</dbReference>
<dbReference type="InterPro" id="IPR043957">
    <property type="entry name" value="Vanin_C"/>
</dbReference>
<dbReference type="PANTHER" id="PTHR10609:SF14">
    <property type="entry name" value="BIOTINIDASE"/>
    <property type="match status" value="1"/>
</dbReference>
<dbReference type="PANTHER" id="PTHR10609">
    <property type="entry name" value="BIOTINIDASE-RELATED"/>
    <property type="match status" value="1"/>
</dbReference>
<dbReference type="Pfam" id="PF00795">
    <property type="entry name" value="CN_hydrolase"/>
    <property type="match status" value="1"/>
</dbReference>
<dbReference type="Pfam" id="PF19018">
    <property type="entry name" value="Vanin_C"/>
    <property type="match status" value="1"/>
</dbReference>
<dbReference type="PIRSF" id="PIRSF011861">
    <property type="entry name" value="Biotinidase"/>
    <property type="match status" value="1"/>
</dbReference>
<dbReference type="SUPFAM" id="SSF56317">
    <property type="entry name" value="Carbon-nitrogen hydrolase"/>
    <property type="match status" value="1"/>
</dbReference>
<dbReference type="PROSITE" id="PS50263">
    <property type="entry name" value="CN_HYDROLASE"/>
    <property type="match status" value="1"/>
</dbReference>
<reference evidence="4" key="1">
    <citation type="journal article" date="2000" name="Science">
        <title>The genome sequence of Drosophila melanogaster.</title>
        <authorList>
            <person name="Adams M.D."/>
            <person name="Celniker S.E."/>
            <person name="Holt R.A."/>
            <person name="Evans C.A."/>
            <person name="Gocayne J.D."/>
            <person name="Amanatides P.G."/>
            <person name="Scherer S.E."/>
            <person name="Li P.W."/>
            <person name="Hoskins R.A."/>
            <person name="Galle R.F."/>
            <person name="George R.A."/>
            <person name="Lewis S.E."/>
            <person name="Richards S."/>
            <person name="Ashburner M."/>
            <person name="Henderson S.N."/>
            <person name="Sutton G.G."/>
            <person name="Wortman J.R."/>
            <person name="Yandell M.D."/>
            <person name="Zhang Q."/>
            <person name="Chen L.X."/>
            <person name="Brandon R.C."/>
            <person name="Rogers Y.-H.C."/>
            <person name="Blazej R.G."/>
            <person name="Champe M."/>
            <person name="Pfeiffer B.D."/>
            <person name="Wan K.H."/>
            <person name="Doyle C."/>
            <person name="Baxter E.G."/>
            <person name="Helt G."/>
            <person name="Nelson C.R."/>
            <person name="Miklos G.L.G."/>
            <person name="Abril J.F."/>
            <person name="Agbayani A."/>
            <person name="An H.-J."/>
            <person name="Andrews-Pfannkoch C."/>
            <person name="Baldwin D."/>
            <person name="Ballew R.M."/>
            <person name="Basu A."/>
            <person name="Baxendale J."/>
            <person name="Bayraktaroglu L."/>
            <person name="Beasley E.M."/>
            <person name="Beeson K.Y."/>
            <person name="Benos P.V."/>
            <person name="Berman B.P."/>
            <person name="Bhandari D."/>
            <person name="Bolshakov S."/>
            <person name="Borkova D."/>
            <person name="Botchan M.R."/>
            <person name="Bouck J."/>
            <person name="Brokstein P."/>
            <person name="Brottier P."/>
            <person name="Burtis K.C."/>
            <person name="Busam D.A."/>
            <person name="Butler H."/>
            <person name="Cadieu E."/>
            <person name="Center A."/>
            <person name="Chandra I."/>
            <person name="Cherry J.M."/>
            <person name="Cawley S."/>
            <person name="Dahlke C."/>
            <person name="Davenport L.B."/>
            <person name="Davies P."/>
            <person name="de Pablos B."/>
            <person name="Delcher A."/>
            <person name="Deng Z."/>
            <person name="Mays A.D."/>
            <person name="Dew I."/>
            <person name="Dietz S.M."/>
            <person name="Dodson K."/>
            <person name="Doup L.E."/>
            <person name="Downes M."/>
            <person name="Dugan-Rocha S."/>
            <person name="Dunkov B.C."/>
            <person name="Dunn P."/>
            <person name="Durbin K.J."/>
            <person name="Evangelista C.C."/>
            <person name="Ferraz C."/>
            <person name="Ferriera S."/>
            <person name="Fleischmann W."/>
            <person name="Fosler C."/>
            <person name="Gabrielian A.E."/>
            <person name="Garg N.S."/>
            <person name="Gelbart W.M."/>
            <person name="Glasser K."/>
            <person name="Glodek A."/>
            <person name="Gong F."/>
            <person name="Gorrell J.H."/>
            <person name="Gu Z."/>
            <person name="Guan P."/>
            <person name="Harris M."/>
            <person name="Harris N.L."/>
            <person name="Harvey D.A."/>
            <person name="Heiman T.J."/>
            <person name="Hernandez J.R."/>
            <person name="Houck J."/>
            <person name="Hostin D."/>
            <person name="Houston K.A."/>
            <person name="Howland T.J."/>
            <person name="Wei M.-H."/>
            <person name="Ibegwam C."/>
            <person name="Jalali M."/>
            <person name="Kalush F."/>
            <person name="Karpen G.H."/>
            <person name="Ke Z."/>
            <person name="Kennison J.A."/>
            <person name="Ketchum K.A."/>
            <person name="Kimmel B.E."/>
            <person name="Kodira C.D."/>
            <person name="Kraft C.L."/>
            <person name="Kravitz S."/>
            <person name="Kulp D."/>
            <person name="Lai Z."/>
            <person name="Lasko P."/>
            <person name="Lei Y."/>
            <person name="Levitsky A.A."/>
            <person name="Li J.H."/>
            <person name="Li Z."/>
            <person name="Liang Y."/>
            <person name="Lin X."/>
            <person name="Liu X."/>
            <person name="Mattei B."/>
            <person name="McIntosh T.C."/>
            <person name="McLeod M.P."/>
            <person name="McPherson D."/>
            <person name="Merkulov G."/>
            <person name="Milshina N.V."/>
            <person name="Mobarry C."/>
            <person name="Morris J."/>
            <person name="Moshrefi A."/>
            <person name="Mount S.M."/>
            <person name="Moy M."/>
            <person name="Murphy B."/>
            <person name="Murphy L."/>
            <person name="Muzny D.M."/>
            <person name="Nelson D.L."/>
            <person name="Nelson D.R."/>
            <person name="Nelson K.A."/>
            <person name="Nixon K."/>
            <person name="Nusskern D.R."/>
            <person name="Pacleb J.M."/>
            <person name="Palazzolo M."/>
            <person name="Pittman G.S."/>
            <person name="Pan S."/>
            <person name="Pollard J."/>
            <person name="Puri V."/>
            <person name="Reese M.G."/>
            <person name="Reinert K."/>
            <person name="Remington K."/>
            <person name="Saunders R.D.C."/>
            <person name="Scheeler F."/>
            <person name="Shen H."/>
            <person name="Shue B.C."/>
            <person name="Siden-Kiamos I."/>
            <person name="Simpson M."/>
            <person name="Skupski M.P."/>
            <person name="Smith T.J."/>
            <person name="Spier E."/>
            <person name="Spradling A.C."/>
            <person name="Stapleton M."/>
            <person name="Strong R."/>
            <person name="Sun E."/>
            <person name="Svirskas R."/>
            <person name="Tector C."/>
            <person name="Turner R."/>
            <person name="Venter E."/>
            <person name="Wang A.H."/>
            <person name="Wang X."/>
            <person name="Wang Z.-Y."/>
            <person name="Wassarman D.A."/>
            <person name="Weinstock G.M."/>
            <person name="Weissenbach J."/>
            <person name="Williams S.M."/>
            <person name="Woodage T."/>
            <person name="Worley K.C."/>
            <person name="Wu D."/>
            <person name="Yang S."/>
            <person name="Yao Q.A."/>
            <person name="Ye J."/>
            <person name="Yeh R.-F."/>
            <person name="Zaveri J.S."/>
            <person name="Zhan M."/>
            <person name="Zhang G."/>
            <person name="Zhao Q."/>
            <person name="Zheng L."/>
            <person name="Zheng X.H."/>
            <person name="Zhong F.N."/>
            <person name="Zhong W."/>
            <person name="Zhou X."/>
            <person name="Zhu S.C."/>
            <person name="Zhu X."/>
            <person name="Smith H.O."/>
            <person name="Gibbs R.A."/>
            <person name="Myers E.W."/>
            <person name="Rubin G.M."/>
            <person name="Venter J.C."/>
        </authorList>
    </citation>
    <scope>NUCLEOTIDE SEQUENCE [LARGE SCALE GENOMIC DNA]</scope>
    <source>
        <strain>Berkeley</strain>
    </source>
</reference>
<reference evidence="4" key="2">
    <citation type="journal article" date="2002" name="Genome Biol.">
        <title>Annotation of the Drosophila melanogaster euchromatic genome: a systematic review.</title>
        <authorList>
            <person name="Misra S."/>
            <person name="Crosby M.A."/>
            <person name="Mungall C.J."/>
            <person name="Matthews B.B."/>
            <person name="Campbell K.S."/>
            <person name="Hradecky P."/>
            <person name="Huang Y."/>
            <person name="Kaminker J.S."/>
            <person name="Millburn G.H."/>
            <person name="Prochnik S.E."/>
            <person name="Smith C.D."/>
            <person name="Tupy J.L."/>
            <person name="Whitfield E.J."/>
            <person name="Bayraktaroglu L."/>
            <person name="Berman B.P."/>
            <person name="Bettencourt B.R."/>
            <person name="Celniker S.E."/>
            <person name="de Grey A.D.N.J."/>
            <person name="Drysdale R.A."/>
            <person name="Harris N.L."/>
            <person name="Richter J."/>
            <person name="Russo S."/>
            <person name="Schroeder A.J."/>
            <person name="Shu S.Q."/>
            <person name="Stapleton M."/>
            <person name="Yamada C."/>
            <person name="Ashburner M."/>
            <person name="Gelbart W.M."/>
            <person name="Rubin G.M."/>
            <person name="Lewis S.E."/>
        </authorList>
    </citation>
    <scope>GENOME REANNOTATION</scope>
    <source>
        <strain>Berkeley</strain>
    </source>
</reference>
<reference evidence="6" key="3">
    <citation type="submission" date="2010-04" db="EMBL/GenBank/DDBJ databases">
        <authorList>
            <person name="Carlson J."/>
            <person name="Booth B."/>
            <person name="Frise E."/>
            <person name="Park S."/>
            <person name="Wan K."/>
            <person name="Yu C."/>
            <person name="Celniker S."/>
        </authorList>
    </citation>
    <scope>NUCLEOTIDE SEQUENCE [LARGE SCALE MRNA] (ISOFORM A)</scope>
</reference>
<reference key="4">
    <citation type="journal article" date="2014" name="G3 (Bethesda)">
        <title>Developmental ethanol exposure leads to dysregulation of lipid metabolism and oxidative stress in Drosophila.</title>
        <authorList>
            <person name="Logan-Garbisch T."/>
            <person name="Bortolazzo A."/>
            <person name="Luu P."/>
            <person name="Ford A."/>
            <person name="Do D."/>
            <person name="Khodabakhshi P."/>
            <person name="French R.L."/>
        </authorList>
    </citation>
    <scope>TISSUE SPECIFICITY</scope>
    <scope>INDUCTION</scope>
</reference>
<sequence>MAKNYWGFFLFCLALGLMLNLSQQASLFKRDFYTAGVVEFEPSNELSDNLAGYLEIIQSQNATSTDIIVFPESTLNSAGSTTFVPNPEDQINPCLSDPNATYYEEFLVTLSCAARNASKYIVINLTEKQKCEDIPEDTRPCASNGLNVFNTNVVFDRQGVVVSRYRKVHLYGEPKNSTFLPELSTFETDFGVTFGHFICFDILFYTPAHQLIVEQGITDFVYPAMWFSQLPFLTVNGIFSSKAVQIQLGWSYANNVNLLAAGASDPIVGNSGSGIYHGRSGSLRSVMRQESGERSIYVARVPKYRAKRRMKRDLKRQVATSSSFNIKRDYLENFTSEELKIDAGKIGNLSQNLCHGGFCCHFDLAWRSLGKPSRNTSHYSYRVGIYEGWRNEKRLDVNYIRNCGVFTCSGNSIDDCGQLLPDIQRPLVTFTHVEIRVTYPQSREFLLFPDTLLDNLLPLEPKQFEWSQKRISEESHQVRFALRKSLEVKHLLTFGIYGNYYNNECTFGVGTAEEQLECGYKNPKI</sequence>